<sequence>MAKYKVGMVSLGCDKNRVDSEIMLGMVQNEYELTNNPKEADIIIVNTCGFIEKAKQESINTILDMAKYKTSHNCKLLIATGCLTQRYGDELLELMPEIDIMLGVNDYAKINEAIMNFINGNNEKVKATNYSDVSINEGLRLITTDKATAYLRIAEGCDNFCTYCIIPKIRGKFRSRALESIVEEAKKLAENGVKELILIAQDTTNYGIDIYGEKKLHLVLRELAKIEGIEWIRVLYCYPEAIYDELIKEISVNDKVCNYLDLPIQHISNNVLKRMGRKTTKEEIIGKINDLRKNVPNIVLRTSLIVGFPGESCEDFNELKDFIKTIKLDKVGVFTYSREEGTPAAIMEDQIDEEVKKAREEEIMLLQKEVSEEINKNKVGREYDVLIEKFNGEYYIGRSYEMAPDIDGCIYVKGNGAKKDQFCKVKIEKALEYDLVGVVCNESCK</sequence>
<comment type="function">
    <text evidence="1">Catalyzes the methylthiolation of an aspartic acid residue of ribosomal protein uS12.</text>
</comment>
<comment type="catalytic activity">
    <reaction evidence="1">
        <text>L-aspartate(89)-[ribosomal protein uS12]-hydrogen + (sulfur carrier)-SH + AH2 + 2 S-adenosyl-L-methionine = 3-methylsulfanyl-L-aspartate(89)-[ribosomal protein uS12]-hydrogen + (sulfur carrier)-H + 5'-deoxyadenosine + L-methionine + A + S-adenosyl-L-homocysteine + 2 H(+)</text>
        <dbReference type="Rhea" id="RHEA:37087"/>
        <dbReference type="Rhea" id="RHEA-COMP:10460"/>
        <dbReference type="Rhea" id="RHEA-COMP:10461"/>
        <dbReference type="Rhea" id="RHEA-COMP:14737"/>
        <dbReference type="Rhea" id="RHEA-COMP:14739"/>
        <dbReference type="ChEBI" id="CHEBI:13193"/>
        <dbReference type="ChEBI" id="CHEBI:15378"/>
        <dbReference type="ChEBI" id="CHEBI:17319"/>
        <dbReference type="ChEBI" id="CHEBI:17499"/>
        <dbReference type="ChEBI" id="CHEBI:29917"/>
        <dbReference type="ChEBI" id="CHEBI:29961"/>
        <dbReference type="ChEBI" id="CHEBI:57844"/>
        <dbReference type="ChEBI" id="CHEBI:57856"/>
        <dbReference type="ChEBI" id="CHEBI:59789"/>
        <dbReference type="ChEBI" id="CHEBI:64428"/>
        <dbReference type="ChEBI" id="CHEBI:73599"/>
        <dbReference type="EC" id="2.8.4.4"/>
    </reaction>
</comment>
<comment type="cofactor">
    <cofactor evidence="1">
        <name>[4Fe-4S] cluster</name>
        <dbReference type="ChEBI" id="CHEBI:49883"/>
    </cofactor>
    <text evidence="1">Binds 2 [4Fe-4S] clusters. One cluster is coordinated with 3 cysteines and an exchangeable S-adenosyl-L-methionine.</text>
</comment>
<comment type="subcellular location">
    <subcellularLocation>
        <location evidence="1">Cytoplasm</location>
    </subcellularLocation>
</comment>
<comment type="similarity">
    <text evidence="1">Belongs to the methylthiotransferase family. RimO subfamily.</text>
</comment>
<reference key="1">
    <citation type="journal article" date="2006" name="Genome Res.">
        <title>Skewed genomic variability in strains of the toxigenic bacterial pathogen, Clostridium perfringens.</title>
        <authorList>
            <person name="Myers G.S.A."/>
            <person name="Rasko D.A."/>
            <person name="Cheung J.K."/>
            <person name="Ravel J."/>
            <person name="Seshadri R."/>
            <person name="DeBoy R.T."/>
            <person name="Ren Q."/>
            <person name="Varga J."/>
            <person name="Awad M.M."/>
            <person name="Brinkac L.M."/>
            <person name="Daugherty S.C."/>
            <person name="Haft D.H."/>
            <person name="Dodson R.J."/>
            <person name="Madupu R."/>
            <person name="Nelson W.C."/>
            <person name="Rosovitz M.J."/>
            <person name="Sullivan S.A."/>
            <person name="Khouri H."/>
            <person name="Dimitrov G.I."/>
            <person name="Watkins K.L."/>
            <person name="Mulligan S."/>
            <person name="Benton J."/>
            <person name="Radune D."/>
            <person name="Fisher D.J."/>
            <person name="Atkins H.S."/>
            <person name="Hiscox T."/>
            <person name="Jost B.H."/>
            <person name="Billington S.J."/>
            <person name="Songer J.G."/>
            <person name="McClane B.A."/>
            <person name="Titball R.W."/>
            <person name="Rood J.I."/>
            <person name="Melville S.B."/>
            <person name="Paulsen I.T."/>
        </authorList>
    </citation>
    <scope>NUCLEOTIDE SEQUENCE [LARGE SCALE GENOMIC DNA]</scope>
    <source>
        <strain>ATCC 13124 / DSM 756 / JCM 1290 / NCIMB 6125 / NCTC 8237 / S 107 / Type A</strain>
    </source>
</reference>
<feature type="chain" id="PRO_0000374787" description="Ribosomal protein uS12 methylthiotransferase RimO">
    <location>
        <begin position="1"/>
        <end position="445"/>
    </location>
</feature>
<feature type="domain" description="MTTase N-terminal" evidence="1">
    <location>
        <begin position="4"/>
        <end position="119"/>
    </location>
</feature>
<feature type="domain" description="Radical SAM core" evidence="2">
    <location>
        <begin position="143"/>
        <end position="373"/>
    </location>
</feature>
<feature type="domain" description="TRAM" evidence="1">
    <location>
        <begin position="376"/>
        <end position="441"/>
    </location>
</feature>
<feature type="binding site" evidence="1">
    <location>
        <position position="13"/>
    </location>
    <ligand>
        <name>[4Fe-4S] cluster</name>
        <dbReference type="ChEBI" id="CHEBI:49883"/>
        <label>1</label>
    </ligand>
</feature>
<feature type="binding site" evidence="1">
    <location>
        <position position="48"/>
    </location>
    <ligand>
        <name>[4Fe-4S] cluster</name>
        <dbReference type="ChEBI" id="CHEBI:49883"/>
        <label>1</label>
    </ligand>
</feature>
<feature type="binding site" evidence="1">
    <location>
        <position position="82"/>
    </location>
    <ligand>
        <name>[4Fe-4S] cluster</name>
        <dbReference type="ChEBI" id="CHEBI:49883"/>
        <label>1</label>
    </ligand>
</feature>
<feature type="binding site" evidence="1">
    <location>
        <position position="157"/>
    </location>
    <ligand>
        <name>[4Fe-4S] cluster</name>
        <dbReference type="ChEBI" id="CHEBI:49883"/>
        <label>2</label>
        <note>4Fe-4S-S-AdoMet</note>
    </ligand>
</feature>
<feature type="binding site" evidence="1">
    <location>
        <position position="161"/>
    </location>
    <ligand>
        <name>[4Fe-4S] cluster</name>
        <dbReference type="ChEBI" id="CHEBI:49883"/>
        <label>2</label>
        <note>4Fe-4S-S-AdoMet</note>
    </ligand>
</feature>
<feature type="binding site" evidence="1">
    <location>
        <position position="164"/>
    </location>
    <ligand>
        <name>[4Fe-4S] cluster</name>
        <dbReference type="ChEBI" id="CHEBI:49883"/>
        <label>2</label>
        <note>4Fe-4S-S-AdoMet</note>
    </ligand>
</feature>
<name>RIMO_CLOP1</name>
<keyword id="KW-0004">4Fe-4S</keyword>
<keyword id="KW-0963">Cytoplasm</keyword>
<keyword id="KW-0408">Iron</keyword>
<keyword id="KW-0411">Iron-sulfur</keyword>
<keyword id="KW-0479">Metal-binding</keyword>
<keyword id="KW-0949">S-adenosyl-L-methionine</keyword>
<keyword id="KW-0808">Transferase</keyword>
<gene>
    <name evidence="1" type="primary">rimO</name>
    <name type="ordered locus">CPF_1929</name>
</gene>
<dbReference type="EC" id="2.8.4.4" evidence="1"/>
<dbReference type="EMBL" id="CP000246">
    <property type="protein sequence ID" value="ABG84692.2"/>
    <property type="molecule type" value="Genomic_DNA"/>
</dbReference>
<dbReference type="RefSeq" id="WP_003459746.1">
    <property type="nucleotide sequence ID" value="NC_008261.1"/>
</dbReference>
<dbReference type="SMR" id="Q0TPS8"/>
<dbReference type="STRING" id="195103.CPF_1929"/>
<dbReference type="PaxDb" id="195103-CPF_1929"/>
<dbReference type="GeneID" id="93001787"/>
<dbReference type="KEGG" id="cpf:CPF_1929"/>
<dbReference type="eggNOG" id="COG0621">
    <property type="taxonomic scope" value="Bacteria"/>
</dbReference>
<dbReference type="HOGENOM" id="CLU_018697_0_1_9"/>
<dbReference type="Proteomes" id="UP000001823">
    <property type="component" value="Chromosome"/>
</dbReference>
<dbReference type="GO" id="GO:0005829">
    <property type="term" value="C:cytosol"/>
    <property type="evidence" value="ECO:0007669"/>
    <property type="project" value="TreeGrafter"/>
</dbReference>
<dbReference type="GO" id="GO:0051539">
    <property type="term" value="F:4 iron, 4 sulfur cluster binding"/>
    <property type="evidence" value="ECO:0007669"/>
    <property type="project" value="UniProtKB-UniRule"/>
</dbReference>
<dbReference type="GO" id="GO:0035599">
    <property type="term" value="F:aspartic acid methylthiotransferase activity"/>
    <property type="evidence" value="ECO:0007669"/>
    <property type="project" value="TreeGrafter"/>
</dbReference>
<dbReference type="GO" id="GO:0046872">
    <property type="term" value="F:metal ion binding"/>
    <property type="evidence" value="ECO:0007669"/>
    <property type="project" value="UniProtKB-KW"/>
</dbReference>
<dbReference type="GO" id="GO:0103039">
    <property type="term" value="F:protein methylthiotransferase activity"/>
    <property type="evidence" value="ECO:0007669"/>
    <property type="project" value="UniProtKB-EC"/>
</dbReference>
<dbReference type="GO" id="GO:0006400">
    <property type="term" value="P:tRNA modification"/>
    <property type="evidence" value="ECO:0007669"/>
    <property type="project" value="InterPro"/>
</dbReference>
<dbReference type="CDD" id="cd01335">
    <property type="entry name" value="Radical_SAM"/>
    <property type="match status" value="1"/>
</dbReference>
<dbReference type="FunFam" id="3.80.30.20:FF:000001">
    <property type="entry name" value="tRNA-2-methylthio-N(6)-dimethylallyladenosine synthase 2"/>
    <property type="match status" value="1"/>
</dbReference>
<dbReference type="Gene3D" id="3.40.50.12160">
    <property type="entry name" value="Methylthiotransferase, N-terminal domain"/>
    <property type="match status" value="1"/>
</dbReference>
<dbReference type="Gene3D" id="2.40.50.140">
    <property type="entry name" value="Nucleic acid-binding proteins"/>
    <property type="match status" value="1"/>
</dbReference>
<dbReference type="Gene3D" id="3.80.30.20">
    <property type="entry name" value="tm_1862 like domain"/>
    <property type="match status" value="1"/>
</dbReference>
<dbReference type="HAMAP" id="MF_01865">
    <property type="entry name" value="MTTase_RimO"/>
    <property type="match status" value="1"/>
</dbReference>
<dbReference type="InterPro" id="IPR006638">
    <property type="entry name" value="Elp3/MiaA/NifB-like_rSAM"/>
</dbReference>
<dbReference type="InterPro" id="IPR005839">
    <property type="entry name" value="Methylthiotransferase"/>
</dbReference>
<dbReference type="InterPro" id="IPR020612">
    <property type="entry name" value="Methylthiotransferase_CS"/>
</dbReference>
<dbReference type="InterPro" id="IPR013848">
    <property type="entry name" value="Methylthiotransferase_N"/>
</dbReference>
<dbReference type="InterPro" id="IPR038135">
    <property type="entry name" value="Methylthiotransferase_N_sf"/>
</dbReference>
<dbReference type="InterPro" id="IPR012340">
    <property type="entry name" value="NA-bd_OB-fold"/>
</dbReference>
<dbReference type="InterPro" id="IPR005840">
    <property type="entry name" value="Ribosomal_uS12_MeSTrfase_RimO"/>
</dbReference>
<dbReference type="InterPro" id="IPR007197">
    <property type="entry name" value="rSAM"/>
</dbReference>
<dbReference type="InterPro" id="IPR023404">
    <property type="entry name" value="rSAM_horseshoe"/>
</dbReference>
<dbReference type="InterPro" id="IPR002792">
    <property type="entry name" value="TRAM_dom"/>
</dbReference>
<dbReference type="NCBIfam" id="TIGR01125">
    <property type="entry name" value="30S ribosomal protein S12 methylthiotransferase RimO"/>
    <property type="match status" value="1"/>
</dbReference>
<dbReference type="NCBIfam" id="TIGR00089">
    <property type="entry name" value="MiaB/RimO family radical SAM methylthiotransferase"/>
    <property type="match status" value="1"/>
</dbReference>
<dbReference type="PANTHER" id="PTHR43837">
    <property type="entry name" value="RIBOSOMAL PROTEIN S12 METHYLTHIOTRANSFERASE RIMO"/>
    <property type="match status" value="1"/>
</dbReference>
<dbReference type="PANTHER" id="PTHR43837:SF1">
    <property type="entry name" value="RIBOSOMAL PROTEIN US12 METHYLTHIOTRANSFERASE RIMO"/>
    <property type="match status" value="1"/>
</dbReference>
<dbReference type="Pfam" id="PF04055">
    <property type="entry name" value="Radical_SAM"/>
    <property type="match status" value="1"/>
</dbReference>
<dbReference type="Pfam" id="PF18693">
    <property type="entry name" value="TRAM_2"/>
    <property type="match status" value="1"/>
</dbReference>
<dbReference type="Pfam" id="PF00919">
    <property type="entry name" value="UPF0004"/>
    <property type="match status" value="1"/>
</dbReference>
<dbReference type="SFLD" id="SFLDG01082">
    <property type="entry name" value="B12-binding_domain_containing"/>
    <property type="match status" value="1"/>
</dbReference>
<dbReference type="SFLD" id="SFLDS00029">
    <property type="entry name" value="Radical_SAM"/>
    <property type="match status" value="1"/>
</dbReference>
<dbReference type="SFLD" id="SFLDF00274">
    <property type="entry name" value="ribosomal_protein_S12_methylth"/>
    <property type="match status" value="1"/>
</dbReference>
<dbReference type="SMART" id="SM00729">
    <property type="entry name" value="Elp3"/>
    <property type="match status" value="1"/>
</dbReference>
<dbReference type="SUPFAM" id="SSF102114">
    <property type="entry name" value="Radical SAM enzymes"/>
    <property type="match status" value="1"/>
</dbReference>
<dbReference type="PROSITE" id="PS51449">
    <property type="entry name" value="MTTASE_N"/>
    <property type="match status" value="1"/>
</dbReference>
<dbReference type="PROSITE" id="PS01278">
    <property type="entry name" value="MTTASE_RADICAL"/>
    <property type="match status" value="1"/>
</dbReference>
<dbReference type="PROSITE" id="PS51918">
    <property type="entry name" value="RADICAL_SAM"/>
    <property type="match status" value="1"/>
</dbReference>
<protein>
    <recommendedName>
        <fullName evidence="1">Ribosomal protein uS12 methylthiotransferase RimO</fullName>
        <shortName evidence="1">uS12 MTTase</shortName>
        <shortName evidence="1">uS12 methylthiotransferase</shortName>
        <ecNumber evidence="1">2.8.4.4</ecNumber>
    </recommendedName>
    <alternativeName>
        <fullName evidence="1">Ribosomal protein uS12 (aspartate-C(3))-methylthiotransferase</fullName>
    </alternativeName>
    <alternativeName>
        <fullName evidence="1">Ribosome maturation factor RimO</fullName>
    </alternativeName>
</protein>
<evidence type="ECO:0000255" key="1">
    <source>
        <dbReference type="HAMAP-Rule" id="MF_01865"/>
    </source>
</evidence>
<evidence type="ECO:0000255" key="2">
    <source>
        <dbReference type="PROSITE-ProRule" id="PRU01266"/>
    </source>
</evidence>
<organism>
    <name type="scientific">Clostridium perfringens (strain ATCC 13124 / DSM 756 / JCM 1290 / NCIMB 6125 / NCTC 8237 / Type A)</name>
    <dbReference type="NCBI Taxonomy" id="195103"/>
    <lineage>
        <taxon>Bacteria</taxon>
        <taxon>Bacillati</taxon>
        <taxon>Bacillota</taxon>
        <taxon>Clostridia</taxon>
        <taxon>Eubacteriales</taxon>
        <taxon>Clostridiaceae</taxon>
        <taxon>Clostridium</taxon>
    </lineage>
</organism>
<accession>Q0TPS8</accession>
<proteinExistence type="inferred from homology"/>